<protein>
    <recommendedName>
        <fullName evidence="1">Hydroxyethylthiazole kinase</fullName>
        <ecNumber evidence="1">2.7.1.50</ecNumber>
    </recommendedName>
    <alternativeName>
        <fullName evidence="1">4-methyl-5-beta-hydroxyethylthiazole kinase</fullName>
        <shortName evidence="1">TH kinase</shortName>
        <shortName evidence="1">Thz kinase</shortName>
    </alternativeName>
</protein>
<organism>
    <name type="scientific">Salmonella schwarzengrund (strain CVM19633)</name>
    <dbReference type="NCBI Taxonomy" id="439843"/>
    <lineage>
        <taxon>Bacteria</taxon>
        <taxon>Pseudomonadati</taxon>
        <taxon>Pseudomonadota</taxon>
        <taxon>Gammaproteobacteria</taxon>
        <taxon>Enterobacterales</taxon>
        <taxon>Enterobacteriaceae</taxon>
        <taxon>Salmonella</taxon>
    </lineage>
</organism>
<reference key="1">
    <citation type="journal article" date="2011" name="J. Bacteriol.">
        <title>Comparative genomics of 28 Salmonella enterica isolates: evidence for CRISPR-mediated adaptive sublineage evolution.</title>
        <authorList>
            <person name="Fricke W.F."/>
            <person name="Mammel M.K."/>
            <person name="McDermott P.F."/>
            <person name="Tartera C."/>
            <person name="White D.G."/>
            <person name="Leclerc J.E."/>
            <person name="Ravel J."/>
            <person name="Cebula T.A."/>
        </authorList>
    </citation>
    <scope>NUCLEOTIDE SEQUENCE [LARGE SCALE GENOMIC DNA]</scope>
    <source>
        <strain>CVM19633</strain>
    </source>
</reference>
<gene>
    <name evidence="1" type="primary">thiM</name>
    <name type="ordered locus">SeSA_A2383</name>
</gene>
<feature type="chain" id="PRO_1000100425" description="Hydroxyethylthiazole kinase">
    <location>
        <begin position="1"/>
        <end position="265"/>
    </location>
</feature>
<feature type="binding site" evidence="1">
    <location>
        <position position="50"/>
    </location>
    <ligand>
        <name>substrate</name>
    </ligand>
</feature>
<feature type="binding site" evidence="1">
    <location>
        <position position="125"/>
    </location>
    <ligand>
        <name>ATP</name>
        <dbReference type="ChEBI" id="CHEBI:30616"/>
    </ligand>
</feature>
<feature type="binding site" evidence="1">
    <location>
        <position position="171"/>
    </location>
    <ligand>
        <name>ATP</name>
        <dbReference type="ChEBI" id="CHEBI:30616"/>
    </ligand>
</feature>
<feature type="binding site" evidence="1">
    <location>
        <position position="198"/>
    </location>
    <ligand>
        <name>substrate</name>
    </ligand>
</feature>
<proteinExistence type="inferred from homology"/>
<name>THIM_SALSV</name>
<accession>B4TNK3</accession>
<keyword id="KW-0067">ATP-binding</keyword>
<keyword id="KW-0418">Kinase</keyword>
<keyword id="KW-0460">Magnesium</keyword>
<keyword id="KW-0479">Metal-binding</keyword>
<keyword id="KW-0547">Nucleotide-binding</keyword>
<keyword id="KW-0784">Thiamine biosynthesis</keyword>
<keyword id="KW-0808">Transferase</keyword>
<dbReference type="EC" id="2.7.1.50" evidence="1"/>
<dbReference type="EMBL" id="CP001127">
    <property type="protein sequence ID" value="ACF90482.1"/>
    <property type="molecule type" value="Genomic_DNA"/>
</dbReference>
<dbReference type="RefSeq" id="WP_001182171.1">
    <property type="nucleotide sequence ID" value="NC_011094.1"/>
</dbReference>
<dbReference type="SMR" id="B4TNK3"/>
<dbReference type="KEGG" id="sew:SeSA_A2383"/>
<dbReference type="HOGENOM" id="CLU_019943_0_1_6"/>
<dbReference type="UniPathway" id="UPA00060">
    <property type="reaction ID" value="UER00139"/>
</dbReference>
<dbReference type="Proteomes" id="UP000001865">
    <property type="component" value="Chromosome"/>
</dbReference>
<dbReference type="GO" id="GO:0005524">
    <property type="term" value="F:ATP binding"/>
    <property type="evidence" value="ECO:0007669"/>
    <property type="project" value="UniProtKB-UniRule"/>
</dbReference>
<dbReference type="GO" id="GO:0004417">
    <property type="term" value="F:hydroxyethylthiazole kinase activity"/>
    <property type="evidence" value="ECO:0007669"/>
    <property type="project" value="UniProtKB-UniRule"/>
</dbReference>
<dbReference type="GO" id="GO:0000287">
    <property type="term" value="F:magnesium ion binding"/>
    <property type="evidence" value="ECO:0007669"/>
    <property type="project" value="UniProtKB-UniRule"/>
</dbReference>
<dbReference type="GO" id="GO:0009228">
    <property type="term" value="P:thiamine biosynthetic process"/>
    <property type="evidence" value="ECO:0007669"/>
    <property type="project" value="UniProtKB-KW"/>
</dbReference>
<dbReference type="GO" id="GO:0009229">
    <property type="term" value="P:thiamine diphosphate biosynthetic process"/>
    <property type="evidence" value="ECO:0007669"/>
    <property type="project" value="UniProtKB-UniRule"/>
</dbReference>
<dbReference type="CDD" id="cd01170">
    <property type="entry name" value="THZ_kinase"/>
    <property type="match status" value="1"/>
</dbReference>
<dbReference type="FunFam" id="3.40.1190.20:FF:000015">
    <property type="entry name" value="Hydroxyethylthiazole kinase"/>
    <property type="match status" value="1"/>
</dbReference>
<dbReference type="Gene3D" id="3.40.1190.20">
    <property type="match status" value="1"/>
</dbReference>
<dbReference type="HAMAP" id="MF_00228">
    <property type="entry name" value="Thz_kinase"/>
    <property type="match status" value="1"/>
</dbReference>
<dbReference type="InterPro" id="IPR000417">
    <property type="entry name" value="Hyethyz_kinase"/>
</dbReference>
<dbReference type="InterPro" id="IPR029056">
    <property type="entry name" value="Ribokinase-like"/>
</dbReference>
<dbReference type="NCBIfam" id="NF006830">
    <property type="entry name" value="PRK09355.1"/>
    <property type="match status" value="1"/>
</dbReference>
<dbReference type="NCBIfam" id="TIGR00694">
    <property type="entry name" value="thiM"/>
    <property type="match status" value="1"/>
</dbReference>
<dbReference type="Pfam" id="PF02110">
    <property type="entry name" value="HK"/>
    <property type="match status" value="1"/>
</dbReference>
<dbReference type="PIRSF" id="PIRSF000513">
    <property type="entry name" value="Thz_kinase"/>
    <property type="match status" value="1"/>
</dbReference>
<dbReference type="PRINTS" id="PR01099">
    <property type="entry name" value="HYETHTZKNASE"/>
</dbReference>
<dbReference type="SUPFAM" id="SSF53613">
    <property type="entry name" value="Ribokinase-like"/>
    <property type="match status" value="1"/>
</dbReference>
<comment type="function">
    <text evidence="1">Catalyzes the phosphorylation of the hydroxyl group of 4-methyl-5-beta-hydroxyethylthiazole (THZ).</text>
</comment>
<comment type="catalytic activity">
    <reaction evidence="1">
        <text>5-(2-hydroxyethyl)-4-methylthiazole + ATP = 4-methyl-5-(2-phosphooxyethyl)-thiazole + ADP + H(+)</text>
        <dbReference type="Rhea" id="RHEA:24212"/>
        <dbReference type="ChEBI" id="CHEBI:15378"/>
        <dbReference type="ChEBI" id="CHEBI:17957"/>
        <dbReference type="ChEBI" id="CHEBI:30616"/>
        <dbReference type="ChEBI" id="CHEBI:58296"/>
        <dbReference type="ChEBI" id="CHEBI:456216"/>
        <dbReference type="EC" id="2.7.1.50"/>
    </reaction>
</comment>
<comment type="cofactor">
    <cofactor evidence="1">
        <name>Mg(2+)</name>
        <dbReference type="ChEBI" id="CHEBI:18420"/>
    </cofactor>
</comment>
<comment type="pathway">
    <text evidence="1">Cofactor biosynthesis; thiamine diphosphate biosynthesis; 4-methyl-5-(2-phosphoethyl)-thiazole from 5-(2-hydroxyethyl)-4-methylthiazole: step 1/1.</text>
</comment>
<comment type="similarity">
    <text evidence="1">Belongs to the Thz kinase family.</text>
</comment>
<evidence type="ECO:0000255" key="1">
    <source>
        <dbReference type="HAMAP-Rule" id="MF_00228"/>
    </source>
</evidence>
<sequence>MQPDLHCRTLAAHTLKHFRALSPLTHCMTNDVVQTFTANTLLALGASPAMVIDPVEARPFAAIANALLVNVGTLTASRAEAMRAAVESAYDAKTPWTLDPVAVGALEFRRRFCLDLLSLRPAAIRGNASEILALSGMALGGRGVDTTEAALAALPAAQALARQIDCIVVVTGEVDYVTNGQRTLSIPGGDPLMTRIVGTGCALSAVVAASCALPGAALDNVASACCWMKLAGQTAAERSEGPGSFIPAFLDALYHLDVEAANEEN</sequence>